<gene>
    <name type="primary">PK1</name>
    <name type="ORF">ORF1</name>
</gene>
<feature type="chain" id="PRO_0000086545" description="Serine/threonine-protein kinase 1">
    <location>
        <begin position="1"/>
        <end position="274"/>
    </location>
</feature>
<feature type="domain" description="Protein kinase" evidence="1">
    <location>
        <begin position="16"/>
        <end position="273"/>
    </location>
</feature>
<feature type="active site" description="Proton acceptor" evidence="1 2">
    <location>
        <position position="134"/>
    </location>
</feature>
<feature type="binding site" evidence="1">
    <location>
        <begin position="22"/>
        <end position="30"/>
    </location>
    <ligand>
        <name>ATP</name>
        <dbReference type="ChEBI" id="CHEBI:30616"/>
    </ligand>
</feature>
<feature type="binding site" evidence="1">
    <location>
        <position position="46"/>
    </location>
    <ligand>
        <name>ATP</name>
        <dbReference type="ChEBI" id="CHEBI:30616"/>
    </ligand>
</feature>
<comment type="catalytic activity">
    <reaction>
        <text>L-seryl-[protein] + ATP = O-phospho-L-seryl-[protein] + ADP + H(+)</text>
        <dbReference type="Rhea" id="RHEA:17989"/>
        <dbReference type="Rhea" id="RHEA-COMP:9863"/>
        <dbReference type="Rhea" id="RHEA-COMP:11604"/>
        <dbReference type="ChEBI" id="CHEBI:15378"/>
        <dbReference type="ChEBI" id="CHEBI:29999"/>
        <dbReference type="ChEBI" id="CHEBI:30616"/>
        <dbReference type="ChEBI" id="CHEBI:83421"/>
        <dbReference type="ChEBI" id="CHEBI:456216"/>
        <dbReference type="EC" id="2.7.11.1"/>
    </reaction>
</comment>
<comment type="catalytic activity">
    <reaction>
        <text>L-threonyl-[protein] + ATP = O-phospho-L-threonyl-[protein] + ADP + H(+)</text>
        <dbReference type="Rhea" id="RHEA:46608"/>
        <dbReference type="Rhea" id="RHEA-COMP:11060"/>
        <dbReference type="Rhea" id="RHEA-COMP:11605"/>
        <dbReference type="ChEBI" id="CHEBI:15378"/>
        <dbReference type="ChEBI" id="CHEBI:30013"/>
        <dbReference type="ChEBI" id="CHEBI:30616"/>
        <dbReference type="ChEBI" id="CHEBI:61977"/>
        <dbReference type="ChEBI" id="CHEBI:456216"/>
        <dbReference type="EC" id="2.7.11.1"/>
    </reaction>
</comment>
<comment type="similarity">
    <text evidence="1">Belongs to the protein kinase superfamily. Ser/Thr protein kinase family.</text>
</comment>
<organism>
    <name type="scientific">Orgyia pseudotsugata multicapsid polyhedrosis virus</name>
    <name type="common">OpMNPV</name>
    <dbReference type="NCBI Taxonomy" id="262177"/>
    <lineage>
        <taxon>Viruses</taxon>
        <taxon>Viruses incertae sedis</taxon>
        <taxon>Naldaviricetes</taxon>
        <taxon>Lefavirales</taxon>
        <taxon>Baculoviridae</taxon>
        <taxon>Alphabaculovirus</taxon>
        <taxon>Alphabaculovirus orpseudotsugatae</taxon>
    </lineage>
</organism>
<keyword id="KW-0067">ATP-binding</keyword>
<keyword id="KW-0418">Kinase</keyword>
<keyword id="KW-0547">Nucleotide-binding</keyword>
<keyword id="KW-1185">Reference proteome</keyword>
<keyword id="KW-0723">Serine/threonine-protein kinase</keyword>
<keyword id="KW-0808">Transferase</keyword>
<organismHost>
    <name type="scientific">Orgyia pseudotsugata</name>
    <name type="common">Douglas-fir tussock moth</name>
    <dbReference type="NCBI Taxonomy" id="33414"/>
</organismHost>
<name>PK1_NPVOP</name>
<proteinExistence type="inferred from homology"/>
<accession>O10269</accession>
<reference key="1">
    <citation type="journal article" date="1997" name="Virology">
        <title>The sequence of the Orgyia pseudotsugata multinucleocapsid nuclear polyhedrosis virus genome.</title>
        <authorList>
            <person name="Ahrens C.H."/>
            <person name="Russell R.R."/>
            <person name="Funk C.J."/>
            <person name="Evans J."/>
            <person name="Harwood S."/>
            <person name="Rohrmann G.F."/>
        </authorList>
    </citation>
    <scope>NUCLEOTIDE SEQUENCE [LARGE SCALE GENOMIC DNA]</scope>
</reference>
<sequence>MDAALQSLSRFVADCAVLAPKVVNGRFGKMDVLHHRPTTSKLFLRKTIAAHSFSADEINVHDLMSDHPSFVDMYFCYSSPTAWAIVMDYVPCPDLFETLQTQGALDNALVVNIVRQLCDALNDLHNATGYIHNDVKLENVLYFGARDRVYLCDYGLCKREHSPVHDGTLEYFSPEKIRRHNYARSFDWYAVGVLAYKLLTGGRHPFERSADEVLDLASMRRRQQYNDPAALKNVRNLMARDFVFCLTRFNFECRSTDYKQIAKHSFLASRHDYI</sequence>
<evidence type="ECO:0000255" key="1">
    <source>
        <dbReference type="PROSITE-ProRule" id="PRU00159"/>
    </source>
</evidence>
<evidence type="ECO:0000255" key="2">
    <source>
        <dbReference type="PROSITE-ProRule" id="PRU10027"/>
    </source>
</evidence>
<dbReference type="EC" id="2.7.11.1"/>
<dbReference type="EMBL" id="U75930">
    <property type="protein sequence ID" value="AAC59000.1"/>
    <property type="molecule type" value="Genomic_DNA"/>
</dbReference>
<dbReference type="RefSeq" id="NP_046157.1">
    <property type="nucleotide sequence ID" value="NC_001875.2"/>
</dbReference>
<dbReference type="SMR" id="O10269"/>
<dbReference type="KEGG" id="vg:912025"/>
<dbReference type="OrthoDB" id="8955at10239"/>
<dbReference type="BRENDA" id="2.7.11.1">
    <property type="organism ID" value="4430"/>
</dbReference>
<dbReference type="Proteomes" id="UP000009248">
    <property type="component" value="Genome"/>
</dbReference>
<dbReference type="GO" id="GO:0005524">
    <property type="term" value="F:ATP binding"/>
    <property type="evidence" value="ECO:0007669"/>
    <property type="project" value="UniProtKB-KW"/>
</dbReference>
<dbReference type="GO" id="GO:0106310">
    <property type="term" value="F:protein serine kinase activity"/>
    <property type="evidence" value="ECO:0007669"/>
    <property type="project" value="RHEA"/>
</dbReference>
<dbReference type="GO" id="GO:0004674">
    <property type="term" value="F:protein serine/threonine kinase activity"/>
    <property type="evidence" value="ECO:0007669"/>
    <property type="project" value="UniProtKB-KW"/>
</dbReference>
<dbReference type="Gene3D" id="1.10.510.10">
    <property type="entry name" value="Transferase(Phosphotransferase) domain 1"/>
    <property type="match status" value="1"/>
</dbReference>
<dbReference type="InterPro" id="IPR011009">
    <property type="entry name" value="Kinase-like_dom_sf"/>
</dbReference>
<dbReference type="InterPro" id="IPR000719">
    <property type="entry name" value="Prot_kinase_dom"/>
</dbReference>
<dbReference type="InterPro" id="IPR008271">
    <property type="entry name" value="Ser/Thr_kinase_AS"/>
</dbReference>
<dbReference type="InterPro" id="IPR050236">
    <property type="entry name" value="Ser_Thr_kinase_AGC"/>
</dbReference>
<dbReference type="PANTHER" id="PTHR24356">
    <property type="entry name" value="SERINE/THREONINE-PROTEIN KINASE"/>
    <property type="match status" value="1"/>
</dbReference>
<dbReference type="Pfam" id="PF00069">
    <property type="entry name" value="Pkinase"/>
    <property type="match status" value="1"/>
</dbReference>
<dbReference type="SMART" id="SM00220">
    <property type="entry name" value="S_TKc"/>
    <property type="match status" value="1"/>
</dbReference>
<dbReference type="SUPFAM" id="SSF56112">
    <property type="entry name" value="Protein kinase-like (PK-like)"/>
    <property type="match status" value="1"/>
</dbReference>
<dbReference type="PROSITE" id="PS50011">
    <property type="entry name" value="PROTEIN_KINASE_DOM"/>
    <property type="match status" value="1"/>
</dbReference>
<dbReference type="PROSITE" id="PS00108">
    <property type="entry name" value="PROTEIN_KINASE_ST"/>
    <property type="match status" value="1"/>
</dbReference>
<protein>
    <recommendedName>
        <fullName>Serine/threonine-protein kinase 1</fullName>
        <ecNumber>2.7.11.1</ecNumber>
    </recommendedName>
</protein>